<protein>
    <recommendedName>
        <fullName evidence="1">DNA-binding protein Mevan_1162</fullName>
    </recommendedName>
</protein>
<gene>
    <name type="ordered locus">Mevan_1162</name>
</gene>
<keyword id="KW-0238">DNA-binding</keyword>
<evidence type="ECO:0000255" key="1">
    <source>
        <dbReference type="HAMAP-Rule" id="MF_00026"/>
    </source>
</evidence>
<evidence type="ECO:0000256" key="2">
    <source>
        <dbReference type="SAM" id="MobiDB-lite"/>
    </source>
</evidence>
<reference key="1">
    <citation type="submission" date="2007-06" db="EMBL/GenBank/DDBJ databases">
        <title>Complete sequence of Methanococcus vannielii SB.</title>
        <authorList>
            <consortium name="US DOE Joint Genome Institute"/>
            <person name="Copeland A."/>
            <person name="Lucas S."/>
            <person name="Lapidus A."/>
            <person name="Barry K."/>
            <person name="Glavina del Rio T."/>
            <person name="Dalin E."/>
            <person name="Tice H."/>
            <person name="Pitluck S."/>
            <person name="Chain P."/>
            <person name="Malfatti S."/>
            <person name="Shin M."/>
            <person name="Vergez L."/>
            <person name="Schmutz J."/>
            <person name="Larimer F."/>
            <person name="Land M."/>
            <person name="Hauser L."/>
            <person name="Kyrpides N."/>
            <person name="Anderson I."/>
            <person name="Sieprawska-Lupa M."/>
            <person name="Whitman W.B."/>
            <person name="Richardson P."/>
        </authorList>
    </citation>
    <scope>NUCLEOTIDE SEQUENCE [LARGE SCALE GENOMIC DNA]</scope>
    <source>
        <strain>ATCC 35089 / DSM 1224 / JCM 13029 / OCM 148 / SB</strain>
    </source>
</reference>
<name>Y1162_METVS</name>
<comment type="similarity">
    <text evidence="1">Belongs to the PDCD5 family.</text>
</comment>
<dbReference type="EMBL" id="CP000742">
    <property type="protein sequence ID" value="ABR55060.1"/>
    <property type="molecule type" value="Genomic_DNA"/>
</dbReference>
<dbReference type="RefSeq" id="WP_012065975.1">
    <property type="nucleotide sequence ID" value="NC_009634.1"/>
</dbReference>
<dbReference type="SMR" id="A6URD8"/>
<dbReference type="STRING" id="406327.Mevan_1162"/>
<dbReference type="GeneID" id="5325615"/>
<dbReference type="KEGG" id="mvn:Mevan_1162"/>
<dbReference type="eggNOG" id="arCOG04179">
    <property type="taxonomic scope" value="Archaea"/>
</dbReference>
<dbReference type="HOGENOM" id="CLU_122978_3_0_2"/>
<dbReference type="OrthoDB" id="7912at2157"/>
<dbReference type="Proteomes" id="UP000001107">
    <property type="component" value="Chromosome"/>
</dbReference>
<dbReference type="GO" id="GO:0005829">
    <property type="term" value="C:cytosol"/>
    <property type="evidence" value="ECO:0007669"/>
    <property type="project" value="TreeGrafter"/>
</dbReference>
<dbReference type="GO" id="GO:0003677">
    <property type="term" value="F:DNA binding"/>
    <property type="evidence" value="ECO:0007669"/>
    <property type="project" value="UniProtKB-UniRule"/>
</dbReference>
<dbReference type="Gene3D" id="1.10.8.140">
    <property type="entry name" value="PDCD5-like"/>
    <property type="match status" value="1"/>
</dbReference>
<dbReference type="HAMAP" id="MF_00026">
    <property type="entry name" value="dsDNA_bind"/>
    <property type="match status" value="1"/>
</dbReference>
<dbReference type="InterPro" id="IPR022889">
    <property type="entry name" value="DNA_bind_arc"/>
</dbReference>
<dbReference type="InterPro" id="IPR002836">
    <property type="entry name" value="PDCD5-like"/>
</dbReference>
<dbReference type="InterPro" id="IPR036883">
    <property type="entry name" value="PDCD5-like_sf"/>
</dbReference>
<dbReference type="NCBIfam" id="NF003268">
    <property type="entry name" value="PRK04239.1"/>
    <property type="match status" value="1"/>
</dbReference>
<dbReference type="PANTHER" id="PTHR10840">
    <property type="entry name" value="PROGRAMMED CELL DEATH PROTEIN 5"/>
    <property type="match status" value="1"/>
</dbReference>
<dbReference type="PANTHER" id="PTHR10840:SF0">
    <property type="entry name" value="PROGRAMMED CELL DEATH PROTEIN 5"/>
    <property type="match status" value="1"/>
</dbReference>
<dbReference type="Pfam" id="PF01984">
    <property type="entry name" value="dsDNA_bind"/>
    <property type="match status" value="1"/>
</dbReference>
<dbReference type="PIRSF" id="PIRSF015730">
    <property type="entry name" value="TFAR19"/>
    <property type="match status" value="1"/>
</dbReference>
<dbReference type="SUPFAM" id="SSF46950">
    <property type="entry name" value="Double-stranded DNA-binding domain"/>
    <property type="match status" value="1"/>
</dbReference>
<feature type="chain" id="PRO_1000002202" description="DNA-binding protein Mevan_1162">
    <location>
        <begin position="1"/>
        <end position="113"/>
    </location>
</feature>
<feature type="region of interest" description="Disordered" evidence="2">
    <location>
        <begin position="1"/>
        <end position="22"/>
    </location>
</feature>
<feature type="compositionally biased region" description="Basic and acidic residues" evidence="2">
    <location>
        <begin position="1"/>
        <end position="12"/>
    </location>
</feature>
<organism>
    <name type="scientific">Methanococcus vannielii (strain ATCC 35089 / DSM 1224 / JCM 13029 / OCM 148 / SB)</name>
    <dbReference type="NCBI Taxonomy" id="406327"/>
    <lineage>
        <taxon>Archaea</taxon>
        <taxon>Methanobacteriati</taxon>
        <taxon>Methanobacteriota</taxon>
        <taxon>Methanomada group</taxon>
        <taxon>Methanococci</taxon>
        <taxon>Methanococcales</taxon>
        <taxon>Methanococcaceae</taxon>
        <taxon>Methanococcus</taxon>
    </lineage>
</organism>
<sequence length="113" mass="13525">MDPEEIKQKKLQEMQAKAQDPEYQRQMQEQQMQYEMQKQKVLRQILSEEARSRLARIKLAKPEFARQVESQLIQLAQAGRLPVPLTDEYFKGLLDKIYEMNKSTKREVTITRR</sequence>
<proteinExistence type="inferred from homology"/>
<accession>A6URD8</accession>